<sequence length="369" mass="40324">MDLSIPNPVADTTKQVDGGSPAGGQPQEIDALIVGAGPVGLFQVFELGLLEIKAHVIDSLKVVGGQCVELYPDKPIYDIPAVPICTGQELTDNLLKQIEPFEPTFHLGQEVAVVERREDGRFFVETSLGTRFITKTIFIAAGVGSFQPRTLKVEGIDKFDGKQLFYRVKDPSRFHGRNLVIIGGGDSALDWTLDLVGKAESVVMIHRRDGFRAAPASVAKMKELCEQMEMQFLVGQVGGYEEKDGVLTEIKVTGADGVTRRLPVDDLLVFFGLSPKLGPIAEWGLDLERKQIKVDTEKFETNIPGIFAVGDINTYPGKKKLILSGFHEAALAAFGAAPYIFPEKKIHMQYTTTSPKLHKILGVDSPVFD</sequence>
<name>FENR2_CUPNH</name>
<comment type="catalytic activity">
    <reaction evidence="1">
        <text>2 reduced [2Fe-2S]-[ferredoxin] + NADP(+) + H(+) = 2 oxidized [2Fe-2S]-[ferredoxin] + NADPH</text>
        <dbReference type="Rhea" id="RHEA:20125"/>
        <dbReference type="Rhea" id="RHEA-COMP:10000"/>
        <dbReference type="Rhea" id="RHEA-COMP:10001"/>
        <dbReference type="ChEBI" id="CHEBI:15378"/>
        <dbReference type="ChEBI" id="CHEBI:33737"/>
        <dbReference type="ChEBI" id="CHEBI:33738"/>
        <dbReference type="ChEBI" id="CHEBI:57783"/>
        <dbReference type="ChEBI" id="CHEBI:58349"/>
        <dbReference type="EC" id="1.18.1.2"/>
    </reaction>
</comment>
<comment type="cofactor">
    <cofactor evidence="1">
        <name>FAD</name>
        <dbReference type="ChEBI" id="CHEBI:57692"/>
    </cofactor>
    <text evidence="1">Binds 1 FAD per subunit.</text>
</comment>
<comment type="subunit">
    <text evidence="1">Homodimer.</text>
</comment>
<comment type="similarity">
    <text evidence="1">Belongs to the ferredoxin--NADP reductase type 2 family.</text>
</comment>
<protein>
    <recommendedName>
        <fullName evidence="1">Ferredoxin--NADP reductase 2</fullName>
        <shortName evidence="1">FNR 2</shortName>
        <shortName evidence="1">Fd-NADP(+) reductase 2</shortName>
        <ecNumber evidence="1">1.18.1.2</ecNumber>
    </recommendedName>
</protein>
<evidence type="ECO:0000255" key="1">
    <source>
        <dbReference type="HAMAP-Rule" id="MF_01685"/>
    </source>
</evidence>
<evidence type="ECO:0000256" key="2">
    <source>
        <dbReference type="SAM" id="MobiDB-lite"/>
    </source>
</evidence>
<accession>Q0K8J6</accession>
<feature type="chain" id="PRO_0000364904" description="Ferredoxin--NADP reductase 2">
    <location>
        <begin position="1"/>
        <end position="369"/>
    </location>
</feature>
<feature type="region of interest" description="Disordered" evidence="2">
    <location>
        <begin position="1"/>
        <end position="23"/>
    </location>
</feature>
<feature type="binding site" evidence="1">
    <location>
        <position position="58"/>
    </location>
    <ligand>
        <name>FAD</name>
        <dbReference type="ChEBI" id="CHEBI:57692"/>
    </ligand>
</feature>
<feature type="binding site" evidence="1">
    <location>
        <position position="66"/>
    </location>
    <ligand>
        <name>FAD</name>
        <dbReference type="ChEBI" id="CHEBI:57692"/>
    </ligand>
</feature>
<feature type="binding site" evidence="1">
    <location>
        <position position="71"/>
    </location>
    <ligand>
        <name>FAD</name>
        <dbReference type="ChEBI" id="CHEBI:57692"/>
    </ligand>
</feature>
<feature type="binding site" evidence="1">
    <location>
        <position position="111"/>
    </location>
    <ligand>
        <name>FAD</name>
        <dbReference type="ChEBI" id="CHEBI:57692"/>
    </ligand>
</feature>
<feature type="binding site" evidence="1">
    <location>
        <position position="146"/>
    </location>
    <ligand>
        <name>FAD</name>
        <dbReference type="ChEBI" id="CHEBI:57692"/>
    </ligand>
</feature>
<feature type="binding site" evidence="1">
    <location>
        <position position="311"/>
    </location>
    <ligand>
        <name>FAD</name>
        <dbReference type="ChEBI" id="CHEBI:57692"/>
    </ligand>
</feature>
<feature type="binding site" evidence="1">
    <location>
        <position position="352"/>
    </location>
    <ligand>
        <name>FAD</name>
        <dbReference type="ChEBI" id="CHEBI:57692"/>
    </ligand>
</feature>
<organism>
    <name type="scientific">Cupriavidus necator (strain ATCC 17699 / DSM 428 / KCTC 22496 / NCIMB 10442 / H16 / Stanier 337)</name>
    <name type="common">Ralstonia eutropha</name>
    <dbReference type="NCBI Taxonomy" id="381666"/>
    <lineage>
        <taxon>Bacteria</taxon>
        <taxon>Pseudomonadati</taxon>
        <taxon>Pseudomonadota</taxon>
        <taxon>Betaproteobacteria</taxon>
        <taxon>Burkholderiales</taxon>
        <taxon>Burkholderiaceae</taxon>
        <taxon>Cupriavidus</taxon>
    </lineage>
</organism>
<keyword id="KW-0274">FAD</keyword>
<keyword id="KW-0285">Flavoprotein</keyword>
<keyword id="KW-0521">NADP</keyword>
<keyword id="KW-0560">Oxidoreductase</keyword>
<keyword id="KW-1185">Reference proteome</keyword>
<reference key="1">
    <citation type="journal article" date="2006" name="Nat. Biotechnol.">
        <title>Genome sequence of the bioplastic-producing 'Knallgas' bacterium Ralstonia eutropha H16.</title>
        <authorList>
            <person name="Pohlmann A."/>
            <person name="Fricke W.F."/>
            <person name="Reinecke F."/>
            <person name="Kusian B."/>
            <person name="Liesegang H."/>
            <person name="Cramm R."/>
            <person name="Eitinger T."/>
            <person name="Ewering C."/>
            <person name="Poetter M."/>
            <person name="Schwartz E."/>
            <person name="Strittmatter A."/>
            <person name="Voss I."/>
            <person name="Gottschalk G."/>
            <person name="Steinbuechel A."/>
            <person name="Friedrich B."/>
            <person name="Bowien B."/>
        </authorList>
    </citation>
    <scope>NUCLEOTIDE SEQUENCE [LARGE SCALE GENOMIC DNA]</scope>
    <source>
        <strain>ATCC 17699 / DSM 428 / KCTC 22496 / NCIMB 10442 / H16 / Stanier 337</strain>
    </source>
</reference>
<dbReference type="EC" id="1.18.1.2" evidence="1"/>
<dbReference type="EMBL" id="AM260479">
    <property type="protein sequence ID" value="CAJ93675.1"/>
    <property type="molecule type" value="Genomic_DNA"/>
</dbReference>
<dbReference type="RefSeq" id="WP_010814655.1">
    <property type="nucleotide sequence ID" value="NZ_CP039287.1"/>
</dbReference>
<dbReference type="SMR" id="Q0K8J6"/>
<dbReference type="STRING" id="381666.H16_A2592"/>
<dbReference type="KEGG" id="reh:H16_A2592"/>
<dbReference type="eggNOG" id="COG0492">
    <property type="taxonomic scope" value="Bacteria"/>
</dbReference>
<dbReference type="HOGENOM" id="CLU_031864_5_5_4"/>
<dbReference type="OrthoDB" id="9806179at2"/>
<dbReference type="Proteomes" id="UP000008210">
    <property type="component" value="Chromosome 1"/>
</dbReference>
<dbReference type="GO" id="GO:0004324">
    <property type="term" value="F:ferredoxin-NADP+ reductase activity"/>
    <property type="evidence" value="ECO:0007669"/>
    <property type="project" value="UniProtKB-UniRule"/>
</dbReference>
<dbReference type="GO" id="GO:0050660">
    <property type="term" value="F:flavin adenine dinucleotide binding"/>
    <property type="evidence" value="ECO:0007669"/>
    <property type="project" value="UniProtKB-UniRule"/>
</dbReference>
<dbReference type="GO" id="GO:0050661">
    <property type="term" value="F:NADP binding"/>
    <property type="evidence" value="ECO:0007669"/>
    <property type="project" value="UniProtKB-UniRule"/>
</dbReference>
<dbReference type="Gene3D" id="3.50.50.60">
    <property type="entry name" value="FAD/NAD(P)-binding domain"/>
    <property type="match status" value="2"/>
</dbReference>
<dbReference type="HAMAP" id="MF_01685">
    <property type="entry name" value="FENR2"/>
    <property type="match status" value="1"/>
</dbReference>
<dbReference type="InterPro" id="IPR036188">
    <property type="entry name" value="FAD/NAD-bd_sf"/>
</dbReference>
<dbReference type="InterPro" id="IPR023753">
    <property type="entry name" value="FAD/NAD-binding_dom"/>
</dbReference>
<dbReference type="InterPro" id="IPR022890">
    <property type="entry name" value="Fd--NADP_Rdtase_type_2"/>
</dbReference>
<dbReference type="InterPro" id="IPR050097">
    <property type="entry name" value="Ferredoxin-NADP_redctase_2"/>
</dbReference>
<dbReference type="PANTHER" id="PTHR48105">
    <property type="entry name" value="THIOREDOXIN REDUCTASE 1-RELATED-RELATED"/>
    <property type="match status" value="1"/>
</dbReference>
<dbReference type="Pfam" id="PF07992">
    <property type="entry name" value="Pyr_redox_2"/>
    <property type="match status" value="1"/>
</dbReference>
<dbReference type="PRINTS" id="PR00368">
    <property type="entry name" value="FADPNR"/>
</dbReference>
<dbReference type="PRINTS" id="PR00469">
    <property type="entry name" value="PNDRDTASEII"/>
</dbReference>
<dbReference type="SUPFAM" id="SSF51905">
    <property type="entry name" value="FAD/NAD(P)-binding domain"/>
    <property type="match status" value="2"/>
</dbReference>
<gene>
    <name type="ordered locus">H16_A2592</name>
</gene>
<proteinExistence type="inferred from homology"/>